<evidence type="ECO:0000255" key="1"/>
<evidence type="ECO:0000305" key="2"/>
<organism>
    <name type="scientific">Bacillus subtilis (strain 168)</name>
    <dbReference type="NCBI Taxonomy" id="224308"/>
    <lineage>
        <taxon>Bacteria</taxon>
        <taxon>Bacillati</taxon>
        <taxon>Bacillota</taxon>
        <taxon>Bacilli</taxon>
        <taxon>Bacillales</taxon>
        <taxon>Bacillaceae</taxon>
        <taxon>Bacillus</taxon>
    </lineage>
</organism>
<comment type="subcellular location">
    <subcellularLocation>
        <location evidence="2">Cell membrane</location>
        <topology evidence="2">Multi-pass membrane protein</topology>
    </subcellularLocation>
</comment>
<comment type="similarity">
    <text evidence="2">Belongs to the CorA metal ion transporter (MIT) (TC 1.A.35) family.</text>
</comment>
<feature type="chain" id="PRO_0000376841" description="Putative metal ion transporter YfjQ">
    <location>
        <begin position="1"/>
        <end position="319"/>
    </location>
</feature>
<feature type="transmembrane region" description="Helical" evidence="1">
    <location>
        <begin position="254"/>
        <end position="274"/>
    </location>
</feature>
<feature type="transmembrane region" description="Helical" evidence="1">
    <location>
        <begin position="290"/>
        <end position="310"/>
    </location>
</feature>
<accession>O31543</accession>
<accession>Q79F08</accession>
<sequence length="319" mass="37846">MINITAITTEHQLLKNIPIERVEQPDIAWYWVDFYGPEDTETALLRDFFHFHPLAIEDCFQHMQRPKLDHYDGYRFYVIHALNKETLETEEVDIFQGEKFVVTFHLHETPGIAKVRERLYASPDILKKGPGHISYMIMDQLVDEYFPLVYKIEDRLNEIEESRPHKTYGTLMNEVFDLRTDLLHLRRTIIPMRDLLYRILSLDHVKEQRETKAYFSDIYDHLLKLSEIVESNRDMTSDLRDSYVTLNSNRMNAIMMTLTIVSTIFIPLTFIAGVYGMNFDFMPELHWKYGYFAVLGLMAALVIGMLIWFVHKGWFNIFK</sequence>
<keyword id="KW-1003">Cell membrane</keyword>
<keyword id="KW-0472">Membrane</keyword>
<keyword id="KW-1185">Reference proteome</keyword>
<keyword id="KW-0812">Transmembrane</keyword>
<keyword id="KW-1133">Transmembrane helix</keyword>
<keyword id="KW-0813">Transport</keyword>
<name>YFJQ_BACSU</name>
<reference key="1">
    <citation type="journal article" date="1996" name="Microbiology">
        <title>Cloning and sequencing of a 40.6 kb segment in the 73 degrees-76 degrees region of the Bacillus subtilis chromosome containing genes for trehalose metabolism and acetoin utilization.</title>
        <authorList>
            <person name="Yamamoto H."/>
            <person name="Uchiyama S."/>
            <person name="Sekiguchi J."/>
        </authorList>
    </citation>
    <scope>NUCLEOTIDE SEQUENCE [GENOMIC DNA]</scope>
    <source>
        <strain>168 / AC327</strain>
    </source>
</reference>
<reference key="2">
    <citation type="journal article" date="1997" name="Nature">
        <title>The complete genome sequence of the Gram-positive bacterium Bacillus subtilis.</title>
        <authorList>
            <person name="Kunst F."/>
            <person name="Ogasawara N."/>
            <person name="Moszer I."/>
            <person name="Albertini A.M."/>
            <person name="Alloni G."/>
            <person name="Azevedo V."/>
            <person name="Bertero M.G."/>
            <person name="Bessieres P."/>
            <person name="Bolotin A."/>
            <person name="Borchert S."/>
            <person name="Borriss R."/>
            <person name="Boursier L."/>
            <person name="Brans A."/>
            <person name="Braun M."/>
            <person name="Brignell S.C."/>
            <person name="Bron S."/>
            <person name="Brouillet S."/>
            <person name="Bruschi C.V."/>
            <person name="Caldwell B."/>
            <person name="Capuano V."/>
            <person name="Carter N.M."/>
            <person name="Choi S.-K."/>
            <person name="Codani J.-J."/>
            <person name="Connerton I.F."/>
            <person name="Cummings N.J."/>
            <person name="Daniel R.A."/>
            <person name="Denizot F."/>
            <person name="Devine K.M."/>
            <person name="Duesterhoeft A."/>
            <person name="Ehrlich S.D."/>
            <person name="Emmerson P.T."/>
            <person name="Entian K.-D."/>
            <person name="Errington J."/>
            <person name="Fabret C."/>
            <person name="Ferrari E."/>
            <person name="Foulger D."/>
            <person name="Fritz C."/>
            <person name="Fujita M."/>
            <person name="Fujita Y."/>
            <person name="Fuma S."/>
            <person name="Galizzi A."/>
            <person name="Galleron N."/>
            <person name="Ghim S.-Y."/>
            <person name="Glaser P."/>
            <person name="Goffeau A."/>
            <person name="Golightly E.J."/>
            <person name="Grandi G."/>
            <person name="Guiseppi G."/>
            <person name="Guy B.J."/>
            <person name="Haga K."/>
            <person name="Haiech J."/>
            <person name="Harwood C.R."/>
            <person name="Henaut A."/>
            <person name="Hilbert H."/>
            <person name="Holsappel S."/>
            <person name="Hosono S."/>
            <person name="Hullo M.-F."/>
            <person name="Itaya M."/>
            <person name="Jones L.-M."/>
            <person name="Joris B."/>
            <person name="Karamata D."/>
            <person name="Kasahara Y."/>
            <person name="Klaerr-Blanchard M."/>
            <person name="Klein C."/>
            <person name="Kobayashi Y."/>
            <person name="Koetter P."/>
            <person name="Koningstein G."/>
            <person name="Krogh S."/>
            <person name="Kumano M."/>
            <person name="Kurita K."/>
            <person name="Lapidus A."/>
            <person name="Lardinois S."/>
            <person name="Lauber J."/>
            <person name="Lazarevic V."/>
            <person name="Lee S.-M."/>
            <person name="Levine A."/>
            <person name="Liu H."/>
            <person name="Masuda S."/>
            <person name="Mauel C."/>
            <person name="Medigue C."/>
            <person name="Medina N."/>
            <person name="Mellado R.P."/>
            <person name="Mizuno M."/>
            <person name="Moestl D."/>
            <person name="Nakai S."/>
            <person name="Noback M."/>
            <person name="Noone D."/>
            <person name="O'Reilly M."/>
            <person name="Ogawa K."/>
            <person name="Ogiwara A."/>
            <person name="Oudega B."/>
            <person name="Park S.-H."/>
            <person name="Parro V."/>
            <person name="Pohl T.M."/>
            <person name="Portetelle D."/>
            <person name="Porwollik S."/>
            <person name="Prescott A.M."/>
            <person name="Presecan E."/>
            <person name="Pujic P."/>
            <person name="Purnelle B."/>
            <person name="Rapoport G."/>
            <person name="Rey M."/>
            <person name="Reynolds S."/>
            <person name="Rieger M."/>
            <person name="Rivolta C."/>
            <person name="Rocha E."/>
            <person name="Roche B."/>
            <person name="Rose M."/>
            <person name="Sadaie Y."/>
            <person name="Sato T."/>
            <person name="Scanlan E."/>
            <person name="Schleich S."/>
            <person name="Schroeter R."/>
            <person name="Scoffone F."/>
            <person name="Sekiguchi J."/>
            <person name="Sekowska A."/>
            <person name="Seror S.J."/>
            <person name="Serror P."/>
            <person name="Shin B.-S."/>
            <person name="Soldo B."/>
            <person name="Sorokin A."/>
            <person name="Tacconi E."/>
            <person name="Takagi T."/>
            <person name="Takahashi H."/>
            <person name="Takemaru K."/>
            <person name="Takeuchi M."/>
            <person name="Tamakoshi A."/>
            <person name="Tanaka T."/>
            <person name="Terpstra P."/>
            <person name="Tognoni A."/>
            <person name="Tosato V."/>
            <person name="Uchiyama S."/>
            <person name="Vandenbol M."/>
            <person name="Vannier F."/>
            <person name="Vassarotti A."/>
            <person name="Viari A."/>
            <person name="Wambutt R."/>
            <person name="Wedler E."/>
            <person name="Wedler H."/>
            <person name="Weitzenegger T."/>
            <person name="Winters P."/>
            <person name="Wipat A."/>
            <person name="Yamamoto H."/>
            <person name="Yamane K."/>
            <person name="Yasumoto K."/>
            <person name="Yata K."/>
            <person name="Yoshida K."/>
            <person name="Yoshikawa H.-F."/>
            <person name="Zumstein E."/>
            <person name="Yoshikawa H."/>
            <person name="Danchin A."/>
        </authorList>
    </citation>
    <scope>NUCLEOTIDE SEQUENCE [LARGE SCALE GENOMIC DNA]</scope>
    <source>
        <strain>168</strain>
    </source>
</reference>
<gene>
    <name type="primary">yfjQ</name>
    <name type="ordered locus">BSU08000</name>
</gene>
<dbReference type="EMBL" id="D78509">
    <property type="protein sequence ID" value="BAA24302.1"/>
    <property type="molecule type" value="Genomic_DNA"/>
</dbReference>
<dbReference type="EMBL" id="AL009126">
    <property type="protein sequence ID" value="CAB12629.1"/>
    <property type="molecule type" value="Genomic_DNA"/>
</dbReference>
<dbReference type="PIR" id="H69806">
    <property type="entry name" value="H69806"/>
</dbReference>
<dbReference type="RefSeq" id="NP_388681.1">
    <property type="nucleotide sequence ID" value="NC_000964.3"/>
</dbReference>
<dbReference type="SMR" id="O31543"/>
<dbReference type="FunCoup" id="O31543">
    <property type="interactions" value="470"/>
</dbReference>
<dbReference type="IntAct" id="O31543">
    <property type="interactions" value="1"/>
</dbReference>
<dbReference type="STRING" id="224308.BSU08000"/>
<dbReference type="TCDB" id="1.A.35.3.3">
    <property type="family name" value="the cora metal ion transporter (mit) family"/>
</dbReference>
<dbReference type="PaxDb" id="224308-BSU08000"/>
<dbReference type="EnsemblBacteria" id="CAB12629">
    <property type="protein sequence ID" value="CAB12629"/>
    <property type="gene ID" value="BSU_08000"/>
</dbReference>
<dbReference type="GeneID" id="936159"/>
<dbReference type="KEGG" id="bsu:BSU08000"/>
<dbReference type="PATRIC" id="fig|224308.179.peg.865"/>
<dbReference type="eggNOG" id="COG0598">
    <property type="taxonomic scope" value="Bacteria"/>
</dbReference>
<dbReference type="InParanoid" id="O31543"/>
<dbReference type="OrthoDB" id="9803416at2"/>
<dbReference type="PhylomeDB" id="O31543"/>
<dbReference type="BioCyc" id="BSUB:BSU08000-MONOMER"/>
<dbReference type="Proteomes" id="UP000001570">
    <property type="component" value="Chromosome"/>
</dbReference>
<dbReference type="GO" id="GO:0005886">
    <property type="term" value="C:plasma membrane"/>
    <property type="evidence" value="ECO:0000318"/>
    <property type="project" value="GO_Central"/>
</dbReference>
<dbReference type="GO" id="GO:0050897">
    <property type="term" value="F:cobalt ion binding"/>
    <property type="evidence" value="ECO:0000318"/>
    <property type="project" value="GO_Central"/>
</dbReference>
<dbReference type="GO" id="GO:0015087">
    <property type="term" value="F:cobalt ion transmembrane transporter activity"/>
    <property type="evidence" value="ECO:0000318"/>
    <property type="project" value="GO_Central"/>
</dbReference>
<dbReference type="GO" id="GO:0000287">
    <property type="term" value="F:magnesium ion binding"/>
    <property type="evidence" value="ECO:0000318"/>
    <property type="project" value="GO_Central"/>
</dbReference>
<dbReference type="GO" id="GO:0015095">
    <property type="term" value="F:magnesium ion transmembrane transporter activity"/>
    <property type="evidence" value="ECO:0000318"/>
    <property type="project" value="GO_Central"/>
</dbReference>
<dbReference type="CDD" id="cd12831">
    <property type="entry name" value="TmCorA-like_u2"/>
    <property type="match status" value="1"/>
</dbReference>
<dbReference type="FunFam" id="1.20.58.340:FF:000012">
    <property type="entry name" value="Magnesium transport protein CorA"/>
    <property type="match status" value="1"/>
</dbReference>
<dbReference type="FunFam" id="3.30.460.20:FF:000016">
    <property type="entry name" value="Magnesium transport protein CorA"/>
    <property type="match status" value="1"/>
</dbReference>
<dbReference type="Gene3D" id="3.30.460.20">
    <property type="entry name" value="CorA soluble domain-like"/>
    <property type="match status" value="1"/>
</dbReference>
<dbReference type="Gene3D" id="1.20.58.340">
    <property type="entry name" value="Magnesium transport protein CorA, transmembrane region"/>
    <property type="match status" value="2"/>
</dbReference>
<dbReference type="InterPro" id="IPR045861">
    <property type="entry name" value="CorA_cytoplasmic_dom"/>
</dbReference>
<dbReference type="InterPro" id="IPR045863">
    <property type="entry name" value="CorA_TM1_TM2"/>
</dbReference>
<dbReference type="InterPro" id="IPR004488">
    <property type="entry name" value="Mg/Co-transport_prot_CorA"/>
</dbReference>
<dbReference type="InterPro" id="IPR002523">
    <property type="entry name" value="MgTranspt_CorA/ZnTranspt_ZntB"/>
</dbReference>
<dbReference type="NCBIfam" id="TIGR00383">
    <property type="entry name" value="corA"/>
    <property type="match status" value="1"/>
</dbReference>
<dbReference type="PANTHER" id="PTHR46494">
    <property type="entry name" value="CORA FAMILY METAL ION TRANSPORTER (EUROFUNG)"/>
    <property type="match status" value="1"/>
</dbReference>
<dbReference type="PANTHER" id="PTHR46494:SF1">
    <property type="entry name" value="CORA FAMILY METAL ION TRANSPORTER (EUROFUNG)"/>
    <property type="match status" value="1"/>
</dbReference>
<dbReference type="Pfam" id="PF01544">
    <property type="entry name" value="CorA"/>
    <property type="match status" value="1"/>
</dbReference>
<dbReference type="SUPFAM" id="SSF143865">
    <property type="entry name" value="CorA soluble domain-like"/>
    <property type="match status" value="1"/>
</dbReference>
<dbReference type="SUPFAM" id="SSF144083">
    <property type="entry name" value="Magnesium transport protein CorA, transmembrane region"/>
    <property type="match status" value="1"/>
</dbReference>
<proteinExistence type="inferred from homology"/>
<protein>
    <recommendedName>
        <fullName>Putative metal ion transporter YfjQ</fullName>
    </recommendedName>
</protein>